<reference key="1">
    <citation type="journal article" date="2011" name="J. Bacteriol.">
        <title>Comparative genomics of 28 Salmonella enterica isolates: evidence for CRISPR-mediated adaptive sublineage evolution.</title>
        <authorList>
            <person name="Fricke W.F."/>
            <person name="Mammel M.K."/>
            <person name="McDermott P.F."/>
            <person name="Tartera C."/>
            <person name="White D.G."/>
            <person name="Leclerc J.E."/>
            <person name="Ravel J."/>
            <person name="Cebula T.A."/>
        </authorList>
    </citation>
    <scope>NUCLEOTIDE SEQUENCE [LARGE SCALE GENOMIC DNA]</scope>
    <source>
        <strain>SL476</strain>
    </source>
</reference>
<feature type="chain" id="PRO_1000125154" description="Fluoride-specific ion channel FluC">
    <location>
        <begin position="1"/>
        <end position="127"/>
    </location>
</feature>
<feature type="transmembrane region" description="Helical" evidence="1">
    <location>
        <begin position="4"/>
        <end position="24"/>
    </location>
</feature>
<feature type="transmembrane region" description="Helical" evidence="1">
    <location>
        <begin position="35"/>
        <end position="55"/>
    </location>
</feature>
<feature type="transmembrane region" description="Helical" evidence="1">
    <location>
        <begin position="71"/>
        <end position="91"/>
    </location>
</feature>
<feature type="transmembrane region" description="Helical" evidence="1">
    <location>
        <begin position="103"/>
        <end position="123"/>
    </location>
</feature>
<feature type="binding site" evidence="1">
    <location>
        <position position="75"/>
    </location>
    <ligand>
        <name>Na(+)</name>
        <dbReference type="ChEBI" id="CHEBI:29101"/>
        <note>structural</note>
    </ligand>
</feature>
<feature type="binding site" evidence="1">
    <location>
        <position position="78"/>
    </location>
    <ligand>
        <name>Na(+)</name>
        <dbReference type="ChEBI" id="CHEBI:29101"/>
        <note>structural</note>
    </ligand>
</feature>
<keyword id="KW-0997">Cell inner membrane</keyword>
<keyword id="KW-1003">Cell membrane</keyword>
<keyword id="KW-0407">Ion channel</keyword>
<keyword id="KW-0406">Ion transport</keyword>
<keyword id="KW-0472">Membrane</keyword>
<keyword id="KW-0479">Metal-binding</keyword>
<keyword id="KW-0915">Sodium</keyword>
<keyword id="KW-0812">Transmembrane</keyword>
<keyword id="KW-1133">Transmembrane helix</keyword>
<keyword id="KW-0813">Transport</keyword>
<gene>
    <name evidence="1" type="primary">fluC</name>
    <name evidence="1" type="synonym">crcB</name>
    <name type="ordered locus">SeHA_C0745</name>
</gene>
<sequence>MLQLLLAVFIGGGTGSVARWMLSMRFNPLHQAIPIGTLTANLLGAFIIGMGFAWFNRMTHIDPMWKVLITTGFCGGLTTFSTFSAEVVFLLQEGRFGWALLNVLINLLGSFAMTALAFWLFSAAAAR</sequence>
<name>FLUC_SALHS</name>
<organism>
    <name type="scientific">Salmonella heidelberg (strain SL476)</name>
    <dbReference type="NCBI Taxonomy" id="454169"/>
    <lineage>
        <taxon>Bacteria</taxon>
        <taxon>Pseudomonadati</taxon>
        <taxon>Pseudomonadota</taxon>
        <taxon>Gammaproteobacteria</taxon>
        <taxon>Enterobacterales</taxon>
        <taxon>Enterobacteriaceae</taxon>
        <taxon>Salmonella</taxon>
    </lineage>
</organism>
<accession>B4TAI2</accession>
<protein>
    <recommendedName>
        <fullName evidence="1">Fluoride-specific ion channel FluC</fullName>
    </recommendedName>
</protein>
<dbReference type="EMBL" id="CP001120">
    <property type="protein sequence ID" value="ACF66217.1"/>
    <property type="molecule type" value="Genomic_DNA"/>
</dbReference>
<dbReference type="RefSeq" id="WP_000939753.1">
    <property type="nucleotide sequence ID" value="NC_011083.1"/>
</dbReference>
<dbReference type="SMR" id="B4TAI2"/>
<dbReference type="KEGG" id="seh:SeHA_C0745"/>
<dbReference type="HOGENOM" id="CLU_114342_3_3_6"/>
<dbReference type="Proteomes" id="UP000001866">
    <property type="component" value="Chromosome"/>
</dbReference>
<dbReference type="GO" id="GO:0005886">
    <property type="term" value="C:plasma membrane"/>
    <property type="evidence" value="ECO:0007669"/>
    <property type="project" value="UniProtKB-SubCell"/>
</dbReference>
<dbReference type="GO" id="GO:0062054">
    <property type="term" value="F:fluoride channel activity"/>
    <property type="evidence" value="ECO:0007669"/>
    <property type="project" value="UniProtKB-UniRule"/>
</dbReference>
<dbReference type="GO" id="GO:0046872">
    <property type="term" value="F:metal ion binding"/>
    <property type="evidence" value="ECO:0007669"/>
    <property type="project" value="UniProtKB-KW"/>
</dbReference>
<dbReference type="GO" id="GO:0140114">
    <property type="term" value="P:cellular detoxification of fluoride"/>
    <property type="evidence" value="ECO:0007669"/>
    <property type="project" value="UniProtKB-UniRule"/>
</dbReference>
<dbReference type="HAMAP" id="MF_00454">
    <property type="entry name" value="FluC"/>
    <property type="match status" value="1"/>
</dbReference>
<dbReference type="InterPro" id="IPR003691">
    <property type="entry name" value="FluC"/>
</dbReference>
<dbReference type="NCBIfam" id="TIGR00494">
    <property type="entry name" value="crcB"/>
    <property type="match status" value="1"/>
</dbReference>
<dbReference type="NCBIfam" id="NF010792">
    <property type="entry name" value="PRK14196.1"/>
    <property type="match status" value="1"/>
</dbReference>
<dbReference type="PANTHER" id="PTHR28259">
    <property type="entry name" value="FLUORIDE EXPORT PROTEIN 1-RELATED"/>
    <property type="match status" value="1"/>
</dbReference>
<dbReference type="PANTHER" id="PTHR28259:SF1">
    <property type="entry name" value="FLUORIDE EXPORT PROTEIN 1-RELATED"/>
    <property type="match status" value="1"/>
</dbReference>
<dbReference type="Pfam" id="PF02537">
    <property type="entry name" value="CRCB"/>
    <property type="match status" value="1"/>
</dbReference>
<proteinExistence type="inferred from homology"/>
<comment type="function">
    <text evidence="1">Fluoride-specific ion channel. Important for reducing fluoride concentration in the cell, thus reducing its toxicity.</text>
</comment>
<comment type="catalytic activity">
    <reaction evidence="1">
        <text>fluoride(in) = fluoride(out)</text>
        <dbReference type="Rhea" id="RHEA:76159"/>
        <dbReference type="ChEBI" id="CHEBI:17051"/>
    </reaction>
    <physiologicalReaction direction="left-to-right" evidence="1">
        <dbReference type="Rhea" id="RHEA:76160"/>
    </physiologicalReaction>
</comment>
<comment type="activity regulation">
    <text evidence="1">Na(+) is not transported, but it plays an essential structural role and its presence is essential for fluoride channel function.</text>
</comment>
<comment type="subcellular location">
    <subcellularLocation>
        <location evidence="1">Cell inner membrane</location>
        <topology evidence="1">Multi-pass membrane protein</topology>
    </subcellularLocation>
</comment>
<comment type="similarity">
    <text evidence="1">Belongs to the fluoride channel Fluc/FEX (TC 1.A.43) family.</text>
</comment>
<evidence type="ECO:0000255" key="1">
    <source>
        <dbReference type="HAMAP-Rule" id="MF_00454"/>
    </source>
</evidence>